<keyword id="KW-0067">ATP-binding</keyword>
<keyword id="KW-0460">Magnesium</keyword>
<keyword id="KW-0479">Metal-binding</keyword>
<keyword id="KW-0547">Nucleotide-binding</keyword>
<keyword id="KW-0548">Nucleotidyltransferase</keyword>
<keyword id="KW-0692">RNA repair</keyword>
<keyword id="KW-0694">RNA-binding</keyword>
<keyword id="KW-0808">Transferase</keyword>
<keyword id="KW-0819">tRNA processing</keyword>
<reference key="1">
    <citation type="submission" date="2008-10" db="EMBL/GenBank/DDBJ databases">
        <title>Genome sequence of Bacillus cereus AH820.</title>
        <authorList>
            <person name="Dodson R.J."/>
            <person name="Durkin A.S."/>
            <person name="Rosovitz M.J."/>
            <person name="Rasko D.A."/>
            <person name="Hoffmaster A."/>
            <person name="Ravel J."/>
            <person name="Sutton G."/>
        </authorList>
    </citation>
    <scope>NUCLEOTIDE SEQUENCE [LARGE SCALE GENOMIC DNA]</scope>
    <source>
        <strain>AH820</strain>
    </source>
</reference>
<sequence>MERFKKASSIIETLKQQGHEAYFVGGSVRDLIIDRPIGDIDIATSALPEEVMAIFPRHVPVGLEHGTVIVVENGEPYEVTTFRTESEYEDFRRPSSVQFVRSLEEDLKRRDFTMNAIAMTEEGEMVDLFAGQEAIQKREIVTVGNAADRFQEDALRMMRGIRFVSTLGFSLETKTKQAIETYGHLLEHIAIERITVEFEKLLTGTYCVKGLKELVETKLFSHLPYLQMSEERLLKATQYNWDSFETDIEAWAFFLYCIGEEHPSVFLRQWKFSNKKIKDIVAVLLTIRKRKEKDWDTVLLYKTGIHIAEMAERVYEAMIESYDHTSVERVQTLFQALPIKSRQEMDVTGNDLLNWASKKPGPWVAEMIQKIEEAIVQGNVVNEKECIREWLQECNLL</sequence>
<accession>B7JH21</accession>
<protein>
    <recommendedName>
        <fullName evidence="1">CCA-adding enzyme</fullName>
        <ecNumber evidence="1">2.7.7.72</ecNumber>
    </recommendedName>
    <alternativeName>
        <fullName evidence="1">CCA tRNA nucleotidyltransferase</fullName>
    </alternativeName>
    <alternativeName>
        <fullName evidence="1">tRNA CCA-pyrophosphorylase</fullName>
    </alternativeName>
    <alternativeName>
        <fullName evidence="1">tRNA adenylyl-/cytidylyl- transferase</fullName>
    </alternativeName>
    <alternativeName>
        <fullName evidence="1">tRNA nucleotidyltransferase</fullName>
    </alternativeName>
    <alternativeName>
        <fullName evidence="1">tRNA-NT</fullName>
    </alternativeName>
</protein>
<name>CCA_BACC0</name>
<feature type="chain" id="PRO_1000140068" description="CCA-adding enzyme">
    <location>
        <begin position="1"/>
        <end position="397"/>
    </location>
</feature>
<feature type="binding site" evidence="1">
    <location>
        <position position="26"/>
    </location>
    <ligand>
        <name>ATP</name>
        <dbReference type="ChEBI" id="CHEBI:30616"/>
    </ligand>
</feature>
<feature type="binding site" evidence="1">
    <location>
        <position position="26"/>
    </location>
    <ligand>
        <name>CTP</name>
        <dbReference type="ChEBI" id="CHEBI:37563"/>
    </ligand>
</feature>
<feature type="binding site" evidence="1">
    <location>
        <position position="29"/>
    </location>
    <ligand>
        <name>ATP</name>
        <dbReference type="ChEBI" id="CHEBI:30616"/>
    </ligand>
</feature>
<feature type="binding site" evidence="1">
    <location>
        <position position="29"/>
    </location>
    <ligand>
        <name>CTP</name>
        <dbReference type="ChEBI" id="CHEBI:37563"/>
    </ligand>
</feature>
<feature type="binding site" evidence="1">
    <location>
        <position position="39"/>
    </location>
    <ligand>
        <name>Mg(2+)</name>
        <dbReference type="ChEBI" id="CHEBI:18420"/>
    </ligand>
</feature>
<feature type="binding site" evidence="1">
    <location>
        <position position="41"/>
    </location>
    <ligand>
        <name>Mg(2+)</name>
        <dbReference type="ChEBI" id="CHEBI:18420"/>
    </ligand>
</feature>
<feature type="binding site" evidence="1">
    <location>
        <position position="110"/>
    </location>
    <ligand>
        <name>ATP</name>
        <dbReference type="ChEBI" id="CHEBI:30616"/>
    </ligand>
</feature>
<feature type="binding site" evidence="1">
    <location>
        <position position="110"/>
    </location>
    <ligand>
        <name>CTP</name>
        <dbReference type="ChEBI" id="CHEBI:37563"/>
    </ligand>
</feature>
<feature type="binding site" evidence="1">
    <location>
        <position position="153"/>
    </location>
    <ligand>
        <name>ATP</name>
        <dbReference type="ChEBI" id="CHEBI:30616"/>
    </ligand>
</feature>
<feature type="binding site" evidence="1">
    <location>
        <position position="153"/>
    </location>
    <ligand>
        <name>CTP</name>
        <dbReference type="ChEBI" id="CHEBI:37563"/>
    </ligand>
</feature>
<feature type="binding site" evidence="1">
    <location>
        <position position="156"/>
    </location>
    <ligand>
        <name>ATP</name>
        <dbReference type="ChEBI" id="CHEBI:30616"/>
    </ligand>
</feature>
<feature type="binding site" evidence="1">
    <location>
        <position position="156"/>
    </location>
    <ligand>
        <name>CTP</name>
        <dbReference type="ChEBI" id="CHEBI:37563"/>
    </ligand>
</feature>
<feature type="binding site" evidence="1">
    <location>
        <position position="159"/>
    </location>
    <ligand>
        <name>ATP</name>
        <dbReference type="ChEBI" id="CHEBI:30616"/>
    </ligand>
</feature>
<feature type="binding site" evidence="1">
    <location>
        <position position="159"/>
    </location>
    <ligand>
        <name>CTP</name>
        <dbReference type="ChEBI" id="CHEBI:37563"/>
    </ligand>
</feature>
<feature type="binding site" evidence="1">
    <location>
        <position position="162"/>
    </location>
    <ligand>
        <name>ATP</name>
        <dbReference type="ChEBI" id="CHEBI:30616"/>
    </ligand>
</feature>
<feature type="binding site" evidence="1">
    <location>
        <position position="162"/>
    </location>
    <ligand>
        <name>CTP</name>
        <dbReference type="ChEBI" id="CHEBI:37563"/>
    </ligand>
</feature>
<comment type="function">
    <text evidence="1">Catalyzes the addition and repair of the essential 3'-terminal CCA sequence in tRNAs without using a nucleic acid template. Adds these three nucleotides in the order of C, C, and A to the tRNA nucleotide-73, using CTP and ATP as substrates and producing inorganic pyrophosphate. tRNA 3'-terminal CCA addition is required both for tRNA processing and repair. Also involved in tRNA surveillance by mediating tandem CCA addition to generate a CCACCA at the 3' terminus of unstable tRNAs. While stable tRNAs receive only 3'-terminal CCA, unstable tRNAs are marked with CCACCA and rapidly degraded.</text>
</comment>
<comment type="catalytic activity">
    <reaction evidence="1">
        <text>a tRNA precursor + 2 CTP + ATP = a tRNA with a 3' CCA end + 3 diphosphate</text>
        <dbReference type="Rhea" id="RHEA:14433"/>
        <dbReference type="Rhea" id="RHEA-COMP:10465"/>
        <dbReference type="Rhea" id="RHEA-COMP:10468"/>
        <dbReference type="ChEBI" id="CHEBI:30616"/>
        <dbReference type="ChEBI" id="CHEBI:33019"/>
        <dbReference type="ChEBI" id="CHEBI:37563"/>
        <dbReference type="ChEBI" id="CHEBI:74896"/>
        <dbReference type="ChEBI" id="CHEBI:83071"/>
        <dbReference type="EC" id="2.7.7.72"/>
    </reaction>
</comment>
<comment type="catalytic activity">
    <reaction evidence="1">
        <text>a tRNA with a 3' CCA end + 2 CTP + ATP = a tRNA with a 3' CCACCA end + 3 diphosphate</text>
        <dbReference type="Rhea" id="RHEA:76235"/>
        <dbReference type="Rhea" id="RHEA-COMP:10468"/>
        <dbReference type="Rhea" id="RHEA-COMP:18655"/>
        <dbReference type="ChEBI" id="CHEBI:30616"/>
        <dbReference type="ChEBI" id="CHEBI:33019"/>
        <dbReference type="ChEBI" id="CHEBI:37563"/>
        <dbReference type="ChEBI" id="CHEBI:83071"/>
        <dbReference type="ChEBI" id="CHEBI:195187"/>
    </reaction>
    <physiologicalReaction direction="left-to-right" evidence="1">
        <dbReference type="Rhea" id="RHEA:76236"/>
    </physiologicalReaction>
</comment>
<comment type="cofactor">
    <cofactor evidence="1">
        <name>Mg(2+)</name>
        <dbReference type="ChEBI" id="CHEBI:18420"/>
    </cofactor>
</comment>
<comment type="subunit">
    <text evidence="1">Homodimer.</text>
</comment>
<comment type="miscellaneous">
    <text evidence="1">A single active site specifically recognizes both ATP and CTP and is responsible for their addition.</text>
</comment>
<comment type="similarity">
    <text evidence="1">Belongs to the tRNA nucleotidyltransferase/poly(A) polymerase family. Bacterial CCA-adding enzyme type 3 subfamily.</text>
</comment>
<evidence type="ECO:0000255" key="1">
    <source>
        <dbReference type="HAMAP-Rule" id="MF_01263"/>
    </source>
</evidence>
<gene>
    <name evidence="1" type="primary">cca</name>
    <name type="ordered locus">BCAH820_1630</name>
</gene>
<proteinExistence type="inferred from homology"/>
<dbReference type="EC" id="2.7.7.72" evidence="1"/>
<dbReference type="EMBL" id="CP001283">
    <property type="protein sequence ID" value="ACK90853.1"/>
    <property type="molecule type" value="Genomic_DNA"/>
</dbReference>
<dbReference type="RefSeq" id="WP_000439304.1">
    <property type="nucleotide sequence ID" value="NC_011773.1"/>
</dbReference>
<dbReference type="SMR" id="B7JH21"/>
<dbReference type="KEGG" id="bcu:BCAH820_1630"/>
<dbReference type="HOGENOM" id="CLU_015961_3_0_9"/>
<dbReference type="Proteomes" id="UP000001363">
    <property type="component" value="Chromosome"/>
</dbReference>
<dbReference type="GO" id="GO:0005524">
    <property type="term" value="F:ATP binding"/>
    <property type="evidence" value="ECO:0007669"/>
    <property type="project" value="UniProtKB-UniRule"/>
</dbReference>
<dbReference type="GO" id="GO:0004810">
    <property type="term" value="F:CCA tRNA nucleotidyltransferase activity"/>
    <property type="evidence" value="ECO:0007669"/>
    <property type="project" value="UniProtKB-UniRule"/>
</dbReference>
<dbReference type="GO" id="GO:0000287">
    <property type="term" value="F:magnesium ion binding"/>
    <property type="evidence" value="ECO:0007669"/>
    <property type="project" value="UniProtKB-UniRule"/>
</dbReference>
<dbReference type="GO" id="GO:0000049">
    <property type="term" value="F:tRNA binding"/>
    <property type="evidence" value="ECO:0007669"/>
    <property type="project" value="UniProtKB-UniRule"/>
</dbReference>
<dbReference type="GO" id="GO:0042245">
    <property type="term" value="P:RNA repair"/>
    <property type="evidence" value="ECO:0007669"/>
    <property type="project" value="UniProtKB-KW"/>
</dbReference>
<dbReference type="GO" id="GO:0001680">
    <property type="term" value="P:tRNA 3'-terminal CCA addition"/>
    <property type="evidence" value="ECO:0007669"/>
    <property type="project" value="UniProtKB-UniRule"/>
</dbReference>
<dbReference type="CDD" id="cd05398">
    <property type="entry name" value="NT_ClassII-CCAase"/>
    <property type="match status" value="1"/>
</dbReference>
<dbReference type="Gene3D" id="1.10.110.30">
    <property type="match status" value="1"/>
</dbReference>
<dbReference type="Gene3D" id="1.10.246.80">
    <property type="match status" value="1"/>
</dbReference>
<dbReference type="Gene3D" id="1.20.58.560">
    <property type="match status" value="1"/>
</dbReference>
<dbReference type="Gene3D" id="3.30.460.10">
    <property type="entry name" value="Beta Polymerase, domain 2"/>
    <property type="match status" value="1"/>
</dbReference>
<dbReference type="HAMAP" id="MF_01263">
    <property type="entry name" value="CCA_bact_type3"/>
    <property type="match status" value="1"/>
</dbReference>
<dbReference type="InterPro" id="IPR050264">
    <property type="entry name" value="Bact_CCA-adding_enz_type3_sf"/>
</dbReference>
<dbReference type="InterPro" id="IPR032810">
    <property type="entry name" value="CCA-adding_enz_C"/>
</dbReference>
<dbReference type="InterPro" id="IPR023068">
    <property type="entry name" value="CCA-adding_enz_firmicutes"/>
</dbReference>
<dbReference type="InterPro" id="IPR043519">
    <property type="entry name" value="NT_sf"/>
</dbReference>
<dbReference type="InterPro" id="IPR002646">
    <property type="entry name" value="PolA_pol_head_dom"/>
</dbReference>
<dbReference type="InterPro" id="IPR032828">
    <property type="entry name" value="PolyA_RNA-bd"/>
</dbReference>
<dbReference type="NCBIfam" id="NF009814">
    <property type="entry name" value="PRK13299.1"/>
    <property type="match status" value="1"/>
</dbReference>
<dbReference type="PANTHER" id="PTHR46173">
    <property type="entry name" value="CCA TRNA NUCLEOTIDYLTRANSFERASE 1, MITOCHONDRIAL"/>
    <property type="match status" value="1"/>
</dbReference>
<dbReference type="PANTHER" id="PTHR46173:SF1">
    <property type="entry name" value="CCA TRNA NUCLEOTIDYLTRANSFERASE 1, MITOCHONDRIAL"/>
    <property type="match status" value="1"/>
</dbReference>
<dbReference type="Pfam" id="PF01743">
    <property type="entry name" value="PolyA_pol"/>
    <property type="match status" value="1"/>
</dbReference>
<dbReference type="Pfam" id="PF12627">
    <property type="entry name" value="PolyA_pol_RNAbd"/>
    <property type="match status" value="1"/>
</dbReference>
<dbReference type="Pfam" id="PF13735">
    <property type="entry name" value="tRNA_NucTran2_2"/>
    <property type="match status" value="1"/>
</dbReference>
<dbReference type="SUPFAM" id="SSF81301">
    <property type="entry name" value="Nucleotidyltransferase"/>
    <property type="match status" value="1"/>
</dbReference>
<dbReference type="SUPFAM" id="SSF81891">
    <property type="entry name" value="Poly A polymerase C-terminal region-like"/>
    <property type="match status" value="1"/>
</dbReference>
<organism>
    <name type="scientific">Bacillus cereus (strain AH820)</name>
    <dbReference type="NCBI Taxonomy" id="405535"/>
    <lineage>
        <taxon>Bacteria</taxon>
        <taxon>Bacillati</taxon>
        <taxon>Bacillota</taxon>
        <taxon>Bacilli</taxon>
        <taxon>Bacillales</taxon>
        <taxon>Bacillaceae</taxon>
        <taxon>Bacillus</taxon>
        <taxon>Bacillus cereus group</taxon>
    </lineage>
</organism>